<feature type="chain" id="PRO_1000017004" description="Ribose-5-phosphate isomerase A">
    <location>
        <begin position="1"/>
        <end position="228"/>
    </location>
</feature>
<feature type="active site" description="Proton acceptor" evidence="1">
    <location>
        <position position="106"/>
    </location>
</feature>
<feature type="binding site" evidence="1">
    <location>
        <begin position="29"/>
        <end position="32"/>
    </location>
    <ligand>
        <name>substrate</name>
    </ligand>
</feature>
<feature type="binding site" evidence="1">
    <location>
        <begin position="84"/>
        <end position="87"/>
    </location>
    <ligand>
        <name>substrate</name>
    </ligand>
</feature>
<feature type="binding site" evidence="1">
    <location>
        <begin position="97"/>
        <end position="100"/>
    </location>
    <ligand>
        <name>substrate</name>
    </ligand>
</feature>
<feature type="binding site" evidence="1">
    <location>
        <position position="124"/>
    </location>
    <ligand>
        <name>substrate</name>
    </ligand>
</feature>
<proteinExistence type="inferred from homology"/>
<sequence length="228" mass="24200">MSNFVAEKSIAAVRAVDEVRDGMLVGLGTGSTAAYAVKSLSERIKHGLRITAVATSQATEALALRLAVPLVPFQQLSAVDLTIDGADEIDDRFQAIKGGGGALLREKITESASTRVIIIADSSKLVAQLGKFPLPVEVVPFATEFVRARLSALGARVTVREAGGTPFLTDQGNYILDAALDEIPRPREIAAAITTIPGVLEHGLFLDEIDTIMIARGDMVEVRHRGEA</sequence>
<keyword id="KW-0413">Isomerase</keyword>
<keyword id="KW-1185">Reference proteome</keyword>
<name>RPIA_SPHAL</name>
<reference key="1">
    <citation type="journal article" date="2009" name="Proc. Natl. Acad. Sci. U.S.A.">
        <title>The genomic basis of trophic strategy in marine bacteria.</title>
        <authorList>
            <person name="Lauro F.M."/>
            <person name="McDougald D."/>
            <person name="Thomas T."/>
            <person name="Williams T.J."/>
            <person name="Egan S."/>
            <person name="Rice S."/>
            <person name="DeMaere M.Z."/>
            <person name="Ting L."/>
            <person name="Ertan H."/>
            <person name="Johnson J."/>
            <person name="Ferriera S."/>
            <person name="Lapidus A."/>
            <person name="Anderson I."/>
            <person name="Kyrpides N."/>
            <person name="Munk A.C."/>
            <person name="Detter C."/>
            <person name="Han C.S."/>
            <person name="Brown M.V."/>
            <person name="Robb F.T."/>
            <person name="Kjelleberg S."/>
            <person name="Cavicchioli R."/>
        </authorList>
    </citation>
    <scope>NUCLEOTIDE SEQUENCE [LARGE SCALE GENOMIC DNA]</scope>
    <source>
        <strain>DSM 13593 / LMG 18877 / RB2256</strain>
    </source>
</reference>
<dbReference type="EC" id="5.3.1.6" evidence="1"/>
<dbReference type="EMBL" id="CP000356">
    <property type="protein sequence ID" value="ABF51815.1"/>
    <property type="molecule type" value="Genomic_DNA"/>
</dbReference>
<dbReference type="RefSeq" id="WP_003044927.1">
    <property type="nucleotide sequence ID" value="NC_008048.1"/>
</dbReference>
<dbReference type="SMR" id="Q1GX07"/>
<dbReference type="STRING" id="317655.Sala_0089"/>
<dbReference type="KEGG" id="sal:Sala_0089"/>
<dbReference type="eggNOG" id="COG0120">
    <property type="taxonomic scope" value="Bacteria"/>
</dbReference>
<dbReference type="HOGENOM" id="CLU_056590_1_0_5"/>
<dbReference type="OrthoDB" id="5870696at2"/>
<dbReference type="UniPathway" id="UPA00115">
    <property type="reaction ID" value="UER00412"/>
</dbReference>
<dbReference type="Proteomes" id="UP000006578">
    <property type="component" value="Chromosome"/>
</dbReference>
<dbReference type="GO" id="GO:0005829">
    <property type="term" value="C:cytosol"/>
    <property type="evidence" value="ECO:0007669"/>
    <property type="project" value="TreeGrafter"/>
</dbReference>
<dbReference type="GO" id="GO:0004751">
    <property type="term" value="F:ribose-5-phosphate isomerase activity"/>
    <property type="evidence" value="ECO:0007669"/>
    <property type="project" value="UniProtKB-UniRule"/>
</dbReference>
<dbReference type="GO" id="GO:0006014">
    <property type="term" value="P:D-ribose metabolic process"/>
    <property type="evidence" value="ECO:0007669"/>
    <property type="project" value="TreeGrafter"/>
</dbReference>
<dbReference type="GO" id="GO:0009052">
    <property type="term" value="P:pentose-phosphate shunt, non-oxidative branch"/>
    <property type="evidence" value="ECO:0007669"/>
    <property type="project" value="UniProtKB-UniRule"/>
</dbReference>
<dbReference type="CDD" id="cd01398">
    <property type="entry name" value="RPI_A"/>
    <property type="match status" value="1"/>
</dbReference>
<dbReference type="FunFam" id="3.40.50.1360:FF:000001">
    <property type="entry name" value="Ribose-5-phosphate isomerase A"/>
    <property type="match status" value="1"/>
</dbReference>
<dbReference type="Gene3D" id="3.30.70.260">
    <property type="match status" value="1"/>
</dbReference>
<dbReference type="Gene3D" id="3.40.50.1360">
    <property type="match status" value="1"/>
</dbReference>
<dbReference type="HAMAP" id="MF_00170">
    <property type="entry name" value="Rib_5P_isom_A"/>
    <property type="match status" value="1"/>
</dbReference>
<dbReference type="InterPro" id="IPR037171">
    <property type="entry name" value="NagB/RpiA_transferase-like"/>
</dbReference>
<dbReference type="InterPro" id="IPR020672">
    <property type="entry name" value="Ribose5P_isomerase_typA_subgr"/>
</dbReference>
<dbReference type="InterPro" id="IPR004788">
    <property type="entry name" value="Ribose5P_isomerase_type_A"/>
</dbReference>
<dbReference type="NCBIfam" id="NF001924">
    <property type="entry name" value="PRK00702.1"/>
    <property type="match status" value="1"/>
</dbReference>
<dbReference type="NCBIfam" id="TIGR00021">
    <property type="entry name" value="rpiA"/>
    <property type="match status" value="1"/>
</dbReference>
<dbReference type="PANTHER" id="PTHR11934">
    <property type="entry name" value="RIBOSE-5-PHOSPHATE ISOMERASE"/>
    <property type="match status" value="1"/>
</dbReference>
<dbReference type="PANTHER" id="PTHR11934:SF0">
    <property type="entry name" value="RIBOSE-5-PHOSPHATE ISOMERASE"/>
    <property type="match status" value="1"/>
</dbReference>
<dbReference type="Pfam" id="PF06026">
    <property type="entry name" value="Rib_5-P_isom_A"/>
    <property type="match status" value="1"/>
</dbReference>
<dbReference type="SUPFAM" id="SSF75445">
    <property type="entry name" value="D-ribose-5-phosphate isomerase (RpiA), lid domain"/>
    <property type="match status" value="1"/>
</dbReference>
<dbReference type="SUPFAM" id="SSF100950">
    <property type="entry name" value="NagB/RpiA/CoA transferase-like"/>
    <property type="match status" value="1"/>
</dbReference>
<evidence type="ECO:0000255" key="1">
    <source>
        <dbReference type="HAMAP-Rule" id="MF_00170"/>
    </source>
</evidence>
<accession>Q1GX07</accession>
<protein>
    <recommendedName>
        <fullName evidence="1">Ribose-5-phosphate isomerase A</fullName>
        <ecNumber evidence="1">5.3.1.6</ecNumber>
    </recommendedName>
    <alternativeName>
        <fullName evidence="1">Phosphoriboisomerase A</fullName>
        <shortName evidence="1">PRI</shortName>
    </alternativeName>
</protein>
<comment type="function">
    <text evidence="1">Catalyzes the reversible conversion of ribose-5-phosphate to ribulose 5-phosphate.</text>
</comment>
<comment type="catalytic activity">
    <reaction evidence="1">
        <text>aldehydo-D-ribose 5-phosphate = D-ribulose 5-phosphate</text>
        <dbReference type="Rhea" id="RHEA:14657"/>
        <dbReference type="ChEBI" id="CHEBI:58121"/>
        <dbReference type="ChEBI" id="CHEBI:58273"/>
        <dbReference type="EC" id="5.3.1.6"/>
    </reaction>
</comment>
<comment type="pathway">
    <text evidence="1">Carbohydrate degradation; pentose phosphate pathway; D-ribose 5-phosphate from D-ribulose 5-phosphate (non-oxidative stage): step 1/1.</text>
</comment>
<comment type="subunit">
    <text evidence="1">Homodimer.</text>
</comment>
<comment type="similarity">
    <text evidence="1">Belongs to the ribose 5-phosphate isomerase family.</text>
</comment>
<organism>
    <name type="scientific">Sphingopyxis alaskensis (strain DSM 13593 / LMG 18877 / RB2256)</name>
    <name type="common">Sphingomonas alaskensis</name>
    <dbReference type="NCBI Taxonomy" id="317655"/>
    <lineage>
        <taxon>Bacteria</taxon>
        <taxon>Pseudomonadati</taxon>
        <taxon>Pseudomonadota</taxon>
        <taxon>Alphaproteobacteria</taxon>
        <taxon>Sphingomonadales</taxon>
        <taxon>Sphingomonadaceae</taxon>
        <taxon>Sphingopyxis</taxon>
    </lineage>
</organism>
<gene>
    <name evidence="1" type="primary">rpiA</name>
    <name type="ordered locus">Sala_0089</name>
</gene>